<protein>
    <recommendedName>
        <fullName evidence="1">Large ribosomal subunit protein bL9</fullName>
    </recommendedName>
    <alternativeName>
        <fullName evidence="2">50S ribosomal protein L9</fullName>
    </alternativeName>
</protein>
<keyword id="KW-1185">Reference proteome</keyword>
<keyword id="KW-0687">Ribonucleoprotein</keyword>
<keyword id="KW-0689">Ribosomal protein</keyword>
<keyword id="KW-0694">RNA-binding</keyword>
<keyword id="KW-0699">rRNA-binding</keyword>
<feature type="chain" id="PRO_0000236616" description="Large ribosomal subunit protein bL9">
    <location>
        <begin position="1"/>
        <end position="153"/>
    </location>
</feature>
<reference key="1">
    <citation type="journal article" date="2003" name="Genome Res.">
        <title>Tropheryma whipplei twist: a human pathogenic Actinobacteria with a reduced genome.</title>
        <authorList>
            <person name="Raoult D."/>
            <person name="Ogata H."/>
            <person name="Audic S."/>
            <person name="Robert C."/>
            <person name="Suhre K."/>
            <person name="Drancourt M."/>
            <person name="Claverie J.-M."/>
        </authorList>
    </citation>
    <scope>NUCLEOTIDE SEQUENCE [LARGE SCALE GENOMIC DNA]</scope>
    <source>
        <strain>Twist</strain>
    </source>
</reference>
<dbReference type="EMBL" id="AE014184">
    <property type="protein sequence ID" value="AAO44202.1"/>
    <property type="molecule type" value="Genomic_DNA"/>
</dbReference>
<dbReference type="RefSeq" id="WP_011102354.1">
    <property type="nucleotide sequence ID" value="NC_004572.3"/>
</dbReference>
<dbReference type="SMR" id="Q83GX4"/>
<dbReference type="STRING" id="203267.TWT_105"/>
<dbReference type="KEGG" id="twh:TWT_105"/>
<dbReference type="eggNOG" id="COG0359">
    <property type="taxonomic scope" value="Bacteria"/>
</dbReference>
<dbReference type="HOGENOM" id="CLU_078938_3_0_11"/>
<dbReference type="OrthoDB" id="9788336at2"/>
<dbReference type="Proteomes" id="UP000002200">
    <property type="component" value="Chromosome"/>
</dbReference>
<dbReference type="GO" id="GO:1990904">
    <property type="term" value="C:ribonucleoprotein complex"/>
    <property type="evidence" value="ECO:0007669"/>
    <property type="project" value="UniProtKB-KW"/>
</dbReference>
<dbReference type="GO" id="GO:0005840">
    <property type="term" value="C:ribosome"/>
    <property type="evidence" value="ECO:0007669"/>
    <property type="project" value="UniProtKB-KW"/>
</dbReference>
<dbReference type="GO" id="GO:0019843">
    <property type="term" value="F:rRNA binding"/>
    <property type="evidence" value="ECO:0007669"/>
    <property type="project" value="UniProtKB-UniRule"/>
</dbReference>
<dbReference type="GO" id="GO:0003735">
    <property type="term" value="F:structural constituent of ribosome"/>
    <property type="evidence" value="ECO:0007669"/>
    <property type="project" value="InterPro"/>
</dbReference>
<dbReference type="GO" id="GO:0006412">
    <property type="term" value="P:translation"/>
    <property type="evidence" value="ECO:0007669"/>
    <property type="project" value="UniProtKB-UniRule"/>
</dbReference>
<dbReference type="FunFam" id="3.40.5.10:FF:000003">
    <property type="entry name" value="50S ribosomal protein L9"/>
    <property type="match status" value="1"/>
</dbReference>
<dbReference type="Gene3D" id="3.10.430.100">
    <property type="entry name" value="Ribosomal protein L9, C-terminal domain"/>
    <property type="match status" value="1"/>
</dbReference>
<dbReference type="Gene3D" id="3.40.5.10">
    <property type="entry name" value="Ribosomal protein L9, N-terminal domain"/>
    <property type="match status" value="1"/>
</dbReference>
<dbReference type="HAMAP" id="MF_00503">
    <property type="entry name" value="Ribosomal_bL9"/>
    <property type="match status" value="1"/>
</dbReference>
<dbReference type="InterPro" id="IPR000244">
    <property type="entry name" value="Ribosomal_bL9"/>
</dbReference>
<dbReference type="InterPro" id="IPR009027">
    <property type="entry name" value="Ribosomal_bL9/RNase_H1_N"/>
</dbReference>
<dbReference type="InterPro" id="IPR020594">
    <property type="entry name" value="Ribosomal_bL9_bac/chp"/>
</dbReference>
<dbReference type="InterPro" id="IPR020069">
    <property type="entry name" value="Ribosomal_bL9_C"/>
</dbReference>
<dbReference type="InterPro" id="IPR036791">
    <property type="entry name" value="Ribosomal_bL9_C_sf"/>
</dbReference>
<dbReference type="InterPro" id="IPR020070">
    <property type="entry name" value="Ribosomal_bL9_N"/>
</dbReference>
<dbReference type="InterPro" id="IPR036935">
    <property type="entry name" value="Ribosomal_bL9_N_sf"/>
</dbReference>
<dbReference type="NCBIfam" id="TIGR00158">
    <property type="entry name" value="L9"/>
    <property type="match status" value="1"/>
</dbReference>
<dbReference type="PANTHER" id="PTHR21368">
    <property type="entry name" value="50S RIBOSOMAL PROTEIN L9"/>
    <property type="match status" value="1"/>
</dbReference>
<dbReference type="Pfam" id="PF03948">
    <property type="entry name" value="Ribosomal_L9_C"/>
    <property type="match status" value="1"/>
</dbReference>
<dbReference type="Pfam" id="PF01281">
    <property type="entry name" value="Ribosomal_L9_N"/>
    <property type="match status" value="1"/>
</dbReference>
<dbReference type="SUPFAM" id="SSF55658">
    <property type="entry name" value="L9 N-domain-like"/>
    <property type="match status" value="1"/>
</dbReference>
<dbReference type="SUPFAM" id="SSF55653">
    <property type="entry name" value="Ribosomal protein L9 C-domain"/>
    <property type="match status" value="1"/>
</dbReference>
<dbReference type="PROSITE" id="PS00651">
    <property type="entry name" value="RIBOSOMAL_L9"/>
    <property type="match status" value="1"/>
</dbReference>
<accession>Q83GX4</accession>
<evidence type="ECO:0000255" key="1">
    <source>
        <dbReference type="HAMAP-Rule" id="MF_00503"/>
    </source>
</evidence>
<evidence type="ECO:0000305" key="2"/>
<comment type="function">
    <text evidence="1">Binds to the 23S rRNA.</text>
</comment>
<comment type="similarity">
    <text evidence="1">Belongs to the bacterial ribosomal protein bL9 family.</text>
</comment>
<name>RL9_TROWT</name>
<sequence length="153" mass="16365">MTRVILVQDVNGLGSVGDVVEVKAGYSRNYLVPKGMAVRWTEGAQKHIGDISAARRAREAAALQEARDIANTLAKEAVTRELRLAANAGEDGRLFGSVTAANIAKVLSSASGHKIDRGKIEIDSPIKTLGEHTVKVKLHPNVKVDINVVVYAE</sequence>
<proteinExistence type="inferred from homology"/>
<organism>
    <name type="scientific">Tropheryma whipplei (strain Twist)</name>
    <name type="common">Whipple's bacillus</name>
    <dbReference type="NCBI Taxonomy" id="203267"/>
    <lineage>
        <taxon>Bacteria</taxon>
        <taxon>Bacillati</taxon>
        <taxon>Actinomycetota</taxon>
        <taxon>Actinomycetes</taxon>
        <taxon>Micrococcales</taxon>
        <taxon>Tropherymataceae</taxon>
        <taxon>Tropheryma</taxon>
    </lineage>
</organism>
<gene>
    <name evidence="1" type="primary">rplI</name>
    <name type="ordered locus">TWT_105</name>
</gene>